<sequence length="763" mass="85084">MDTRGCAWLLLLLSLPQGQSHQPLHRSKRRWVLTTLELQEEDPGPFPKLVGELFNNMSNNVSLIYLIRGPGVDEFPEIGLFSIEDHQSGKIYVHRPVDREVTPSFMVHFDAVDRSTGKVVDESLIFNIRIRDVNDHAPQFPEKEFNISVKESQAAGQPIFQLLTVDLDQENTPNSQVLYFLVSQTPLLRESGFRIDLISGEVRLSGCLHYETAPLFTLIVRASDCGEPSLTSTATIHVSVEDSNNHMPTFMEDRYEIRISEGQVEQGVLYLPVQDGDSPFTPAWRTQFNIWDGNEEGHFDIVTDPETNQGLLSIIKPLDYESQVAHSLVVVVENQEQLFVCTEGQLQPLRKAMASTMVSVQVLDTNDPPAFHPQSFIVSEEDGAWPAIQLGYFNATDPDRADSQIRYKLVHDPENWVTVDEKSGVVTTKKQIDRESPHVNDSFYTIIVHAVDNGLPPLTGTGTLMLFLSDVNDNAPTLRPHSRHLEVCESAGSQPLLIEAEDADLDPYADPFTFDLDNAQGDVEETWMLRTKQGEGHSAELTMLRSVPPGDYLVPLFIADRQGLAQKQTVHVRICSCRSGSECEEPSDTWLLWWALSPVGAALMVLSAALLCLLRCSCTFGPKRLRGFIPSDSGHQTLIVYNEESKVPSAQGCDTFFEPRGVKTLLSSTPVYLDRMVPRQQPLQLLEGRVVEAWSQKLQSIDVLEGDTGYLPHVYREEGECEGAETLSSLTFLEQDLSPKLLGCSGSKSTPSEAMCFTSRVPS</sequence>
<organism>
    <name type="scientific">Mus musculus</name>
    <name type="common">Mouse</name>
    <dbReference type="NCBI Taxonomy" id="10090"/>
    <lineage>
        <taxon>Eukaryota</taxon>
        <taxon>Metazoa</taxon>
        <taxon>Chordata</taxon>
        <taxon>Craniata</taxon>
        <taxon>Vertebrata</taxon>
        <taxon>Euteleostomi</taxon>
        <taxon>Mammalia</taxon>
        <taxon>Eutheria</taxon>
        <taxon>Euarchontoglires</taxon>
        <taxon>Glires</taxon>
        <taxon>Rodentia</taxon>
        <taxon>Myomorpha</taxon>
        <taxon>Muroidea</taxon>
        <taxon>Muridae</taxon>
        <taxon>Murinae</taxon>
        <taxon>Mus</taxon>
        <taxon>Mus</taxon>
    </lineage>
</organism>
<name>CAD26_MOUSE</name>
<comment type="function">
    <text evidence="2">Cadherins are calcium-dependent cell adhesion proteins. They preferentially interact with themselves in a homophilic manner in connecting cells; cadherins may thus contribute to the sorting of heterogeneous cell types. Ligand for integrins alpha-E/beta-7, ITGAE:ITGAB7, alpha-4/beta-7, ITGA4:ITGAB7 and alpha-4/beta-1, ITGA4:ITGAB1 through which modulates CD4(+) T cells activation.</text>
</comment>
<comment type="subunit">
    <text evidence="2">Homodimer. Component of a cadherin:catenin adhesion complex composed of at least of CDH26, beta-catenin/CTNNB1, alpha-catenin/CTNNA1 and p120 catenin/CTNND1.</text>
</comment>
<comment type="subcellular location">
    <subcellularLocation>
        <location evidence="2">Cell membrane</location>
        <topology evidence="2">Single-pass type I membrane protein</topology>
    </subcellularLocation>
</comment>
<comment type="domain">
    <text evidence="1">Three calcium ions are usually bound at the interface of each cadherin domain and rigidify the connections, imparting a strong curvature to the full-length ectodomain.</text>
</comment>
<comment type="PTM">
    <text evidence="2">N-glycosylated.</text>
</comment>
<feature type="signal peptide" evidence="3">
    <location>
        <begin position="1"/>
        <end position="20"/>
    </location>
</feature>
<feature type="chain" id="PRO_0000003830" description="Cadherin-like protein 26">
    <location>
        <begin position="21"/>
        <end position="763"/>
    </location>
</feature>
<feature type="topological domain" description="Extracellular" evidence="3">
    <location>
        <begin position="21"/>
        <end position="590"/>
    </location>
</feature>
<feature type="transmembrane region" description="Helical" evidence="3">
    <location>
        <begin position="591"/>
        <end position="611"/>
    </location>
</feature>
<feature type="topological domain" description="Cytoplasmic" evidence="3">
    <location>
        <begin position="612"/>
        <end position="763"/>
    </location>
</feature>
<feature type="domain" description="Cadherin 1" evidence="4">
    <location>
        <begin position="21"/>
        <end position="140"/>
    </location>
</feature>
<feature type="domain" description="Cadherin 2" evidence="4">
    <location>
        <begin position="141"/>
        <end position="250"/>
    </location>
</feature>
<feature type="domain" description="Cadherin 3" evidence="4">
    <location>
        <begin position="251"/>
        <end position="371"/>
    </location>
</feature>
<feature type="domain" description="Cadherin 4" evidence="4">
    <location>
        <begin position="370"/>
        <end position="478"/>
    </location>
</feature>
<feature type="glycosylation site" description="N-linked (GlcNAc...) asparagine" evidence="3">
    <location>
        <position position="56"/>
    </location>
</feature>
<feature type="glycosylation site" description="N-linked (GlcNAc...) asparagine" evidence="3">
    <location>
        <position position="60"/>
    </location>
</feature>
<feature type="glycosylation site" description="N-linked (GlcNAc...) asparagine" evidence="3">
    <location>
        <position position="146"/>
    </location>
</feature>
<feature type="glycosylation site" description="N-linked (GlcNAc...) asparagine" evidence="3">
    <location>
        <position position="394"/>
    </location>
</feature>
<feature type="glycosylation site" description="N-linked (GlcNAc...) asparagine" evidence="3">
    <location>
        <position position="440"/>
    </location>
</feature>
<accession>P59862</accession>
<gene>
    <name type="primary">Cdh26</name>
    <name type="synonym">Gm1010</name>
</gene>
<reference key="1">
    <citation type="journal article" date="2004" name="Genome Res.">
        <title>The status, quality, and expansion of the NIH full-length cDNA project: the Mammalian Gene Collection (MGC).</title>
        <authorList>
            <consortium name="The MGC Project Team"/>
        </authorList>
    </citation>
    <scope>NUCLEOTIDE SEQUENCE [LARGE SCALE MRNA]</scope>
    <source>
        <tissue>Olfactory epithelium</tissue>
    </source>
</reference>
<protein>
    <recommendedName>
        <fullName>Cadherin-like protein 26</fullName>
    </recommendedName>
</protein>
<dbReference type="EMBL" id="BC053928">
    <property type="protein sequence ID" value="AAH53928.1"/>
    <property type="molecule type" value="mRNA"/>
</dbReference>
<dbReference type="CCDS" id="CCDS17162.1"/>
<dbReference type="RefSeq" id="NP_001278118.1">
    <property type="nucleotide sequence ID" value="NM_001291189.1"/>
</dbReference>
<dbReference type="RefSeq" id="NP_941058.1">
    <property type="nucleotide sequence ID" value="NM_198656.3"/>
</dbReference>
<dbReference type="SMR" id="P59862"/>
<dbReference type="BioGRID" id="237927">
    <property type="interactions" value="2"/>
</dbReference>
<dbReference type="FunCoup" id="P59862">
    <property type="interactions" value="24"/>
</dbReference>
<dbReference type="STRING" id="10090.ENSMUSP00000048829"/>
<dbReference type="GlyCosmos" id="P59862">
    <property type="glycosylation" value="5 sites, No reported glycans"/>
</dbReference>
<dbReference type="GlyGen" id="P59862">
    <property type="glycosylation" value="5 sites"/>
</dbReference>
<dbReference type="PhosphoSitePlus" id="P59862"/>
<dbReference type="PaxDb" id="10090-ENSMUSP00000048829"/>
<dbReference type="ProteomicsDB" id="273578"/>
<dbReference type="Antibodypedia" id="2400">
    <property type="antibodies" value="147 antibodies from 24 providers"/>
</dbReference>
<dbReference type="DNASU" id="381409"/>
<dbReference type="Ensembl" id="ENSMUST00000042092.9">
    <property type="protein sequence ID" value="ENSMUSP00000048829.9"/>
    <property type="gene ID" value="ENSMUSG00000039155.16"/>
</dbReference>
<dbReference type="GeneID" id="381409"/>
<dbReference type="KEGG" id="mmu:381409"/>
<dbReference type="UCSC" id="uc008ohr.2">
    <property type="organism name" value="mouse"/>
</dbReference>
<dbReference type="AGR" id="MGI:2685856"/>
<dbReference type="CTD" id="60437"/>
<dbReference type="MGI" id="MGI:2685856">
    <property type="gene designation" value="Cdh26"/>
</dbReference>
<dbReference type="VEuPathDB" id="HostDB:ENSMUSG00000039155"/>
<dbReference type="eggNOG" id="KOG3594">
    <property type="taxonomic scope" value="Eukaryota"/>
</dbReference>
<dbReference type="GeneTree" id="ENSGT00940000161589"/>
<dbReference type="InParanoid" id="P59862"/>
<dbReference type="OMA" id="MRSGSHP"/>
<dbReference type="OrthoDB" id="9045962at2759"/>
<dbReference type="PhylomeDB" id="P59862"/>
<dbReference type="TreeFam" id="TF316817"/>
<dbReference type="BioGRID-ORCS" id="381409">
    <property type="hits" value="2 hits in 79 CRISPR screens"/>
</dbReference>
<dbReference type="ChiTaRS" id="Cdh26">
    <property type="organism name" value="mouse"/>
</dbReference>
<dbReference type="PRO" id="PR:P59862"/>
<dbReference type="Proteomes" id="UP000000589">
    <property type="component" value="Chromosome 2"/>
</dbReference>
<dbReference type="RNAct" id="P59862">
    <property type="molecule type" value="protein"/>
</dbReference>
<dbReference type="Bgee" id="ENSMUSG00000039155">
    <property type="expression patterns" value="Expressed in olfactory epithelium and 34 other cell types or tissues"/>
</dbReference>
<dbReference type="ExpressionAtlas" id="P59862">
    <property type="expression patterns" value="baseline and differential"/>
</dbReference>
<dbReference type="GO" id="GO:0015630">
    <property type="term" value="C:microtubule cytoskeleton"/>
    <property type="evidence" value="ECO:0007669"/>
    <property type="project" value="Ensembl"/>
</dbReference>
<dbReference type="GO" id="GO:0005886">
    <property type="term" value="C:plasma membrane"/>
    <property type="evidence" value="ECO:0000250"/>
    <property type="project" value="UniProtKB"/>
</dbReference>
<dbReference type="GO" id="GO:0045294">
    <property type="term" value="F:alpha-catenin binding"/>
    <property type="evidence" value="ECO:0000250"/>
    <property type="project" value="UniProtKB"/>
</dbReference>
<dbReference type="GO" id="GO:0008013">
    <property type="term" value="F:beta-catenin binding"/>
    <property type="evidence" value="ECO:0000250"/>
    <property type="project" value="UniProtKB"/>
</dbReference>
<dbReference type="GO" id="GO:0005509">
    <property type="term" value="F:calcium ion binding"/>
    <property type="evidence" value="ECO:0007669"/>
    <property type="project" value="InterPro"/>
</dbReference>
<dbReference type="GO" id="GO:0070097">
    <property type="term" value="F:delta-catenin binding"/>
    <property type="evidence" value="ECO:0000250"/>
    <property type="project" value="UniProtKB"/>
</dbReference>
<dbReference type="GO" id="GO:0005178">
    <property type="term" value="F:integrin binding"/>
    <property type="evidence" value="ECO:0000250"/>
    <property type="project" value="UniProtKB"/>
</dbReference>
<dbReference type="GO" id="GO:0035710">
    <property type="term" value="P:CD4-positive, alpha-beta T cell activation"/>
    <property type="evidence" value="ECO:0000250"/>
    <property type="project" value="UniProtKB"/>
</dbReference>
<dbReference type="GO" id="GO:0007156">
    <property type="term" value="P:homophilic cell adhesion via plasma membrane adhesion molecules"/>
    <property type="evidence" value="ECO:0007669"/>
    <property type="project" value="InterPro"/>
</dbReference>
<dbReference type="CDD" id="cd11304">
    <property type="entry name" value="Cadherin_repeat"/>
    <property type="match status" value="4"/>
</dbReference>
<dbReference type="FunFam" id="2.60.40.60:FF:000095">
    <property type="entry name" value="Cadherin 13"/>
    <property type="match status" value="1"/>
</dbReference>
<dbReference type="FunFam" id="2.60.40.60:FF:000019">
    <property type="entry name" value="Cadherin 2"/>
    <property type="match status" value="1"/>
</dbReference>
<dbReference type="FunFam" id="2.60.40.60:FF:000031">
    <property type="entry name" value="Cadherin 3"/>
    <property type="match status" value="1"/>
</dbReference>
<dbReference type="FunFam" id="2.60.40.60:FF:000202">
    <property type="entry name" value="cadherin-8 isoform X4"/>
    <property type="match status" value="1"/>
</dbReference>
<dbReference type="FunFam" id="2.60.40.60:FF:000158">
    <property type="entry name" value="Dachsous cadherin-related 1"/>
    <property type="match status" value="1"/>
</dbReference>
<dbReference type="Gene3D" id="2.60.40.60">
    <property type="entry name" value="Cadherins"/>
    <property type="match status" value="5"/>
</dbReference>
<dbReference type="InterPro" id="IPR039808">
    <property type="entry name" value="Cadherin"/>
</dbReference>
<dbReference type="InterPro" id="IPR002126">
    <property type="entry name" value="Cadherin-like_dom"/>
</dbReference>
<dbReference type="InterPro" id="IPR015919">
    <property type="entry name" value="Cadherin-like_sf"/>
</dbReference>
<dbReference type="InterPro" id="IPR020894">
    <property type="entry name" value="Cadherin_CS"/>
</dbReference>
<dbReference type="PANTHER" id="PTHR24027">
    <property type="entry name" value="CADHERIN-23"/>
    <property type="match status" value="1"/>
</dbReference>
<dbReference type="PANTHER" id="PTHR24027:SF78">
    <property type="entry name" value="CADHERIN-LIKE PROTEIN 26"/>
    <property type="match status" value="1"/>
</dbReference>
<dbReference type="Pfam" id="PF00028">
    <property type="entry name" value="Cadherin"/>
    <property type="match status" value="3"/>
</dbReference>
<dbReference type="PRINTS" id="PR00205">
    <property type="entry name" value="CADHERIN"/>
</dbReference>
<dbReference type="PRINTS" id="PR01820">
    <property type="entry name" value="DESMOCOLLIN"/>
</dbReference>
<dbReference type="SMART" id="SM00112">
    <property type="entry name" value="CA"/>
    <property type="match status" value="4"/>
</dbReference>
<dbReference type="SUPFAM" id="SSF49313">
    <property type="entry name" value="Cadherin-like"/>
    <property type="match status" value="5"/>
</dbReference>
<dbReference type="PROSITE" id="PS00232">
    <property type="entry name" value="CADHERIN_1"/>
    <property type="match status" value="2"/>
</dbReference>
<dbReference type="PROSITE" id="PS50268">
    <property type="entry name" value="CADHERIN_2"/>
    <property type="match status" value="4"/>
</dbReference>
<proteinExistence type="evidence at transcript level"/>
<keyword id="KW-0106">Calcium</keyword>
<keyword id="KW-0130">Cell adhesion</keyword>
<keyword id="KW-1003">Cell membrane</keyword>
<keyword id="KW-0325">Glycoprotein</keyword>
<keyword id="KW-0472">Membrane</keyword>
<keyword id="KW-0479">Metal-binding</keyword>
<keyword id="KW-1185">Reference proteome</keyword>
<keyword id="KW-0677">Repeat</keyword>
<keyword id="KW-0732">Signal</keyword>
<keyword id="KW-0812">Transmembrane</keyword>
<keyword id="KW-1133">Transmembrane helix</keyword>
<evidence type="ECO:0000250" key="1"/>
<evidence type="ECO:0000250" key="2">
    <source>
        <dbReference type="UniProtKB" id="Q8IXH8"/>
    </source>
</evidence>
<evidence type="ECO:0000255" key="3"/>
<evidence type="ECO:0000255" key="4">
    <source>
        <dbReference type="PROSITE-ProRule" id="PRU00043"/>
    </source>
</evidence>